<protein>
    <recommendedName>
        <fullName>Uncharacterized protein alr1449</fullName>
    </recommendedName>
</protein>
<feature type="chain" id="PRO_0000208893" description="Uncharacterized protein alr1449">
    <location>
        <begin position="1"/>
        <end position="192"/>
    </location>
</feature>
<reference key="1">
    <citation type="journal article" date="1990" name="J. Bacteriol.">
        <title>Developmental rearrangement of cyanobacterial nif genes: nucleotide sequence, open reading frames, and cytochrome P-450 homology of the Anabaena sp. strain PCC 7120 nifD element.</title>
        <authorList>
            <person name="Lammers P.J."/>
            <person name="McLaughlin S."/>
            <person name="Papin S."/>
            <person name="Trujillo-Provencio C."/>
            <person name="Ryncarz A.J. II"/>
        </authorList>
    </citation>
    <scope>NUCLEOTIDE SEQUENCE [GENOMIC DNA]</scope>
</reference>
<reference key="2">
    <citation type="journal article" date="2001" name="DNA Res.">
        <title>Complete genomic sequence of the filamentous nitrogen-fixing cyanobacterium Anabaena sp. strain PCC 7120.</title>
        <authorList>
            <person name="Kaneko T."/>
            <person name="Nakamura Y."/>
            <person name="Wolk C.P."/>
            <person name="Kuritz T."/>
            <person name="Sasamoto S."/>
            <person name="Watanabe A."/>
            <person name="Iriguchi M."/>
            <person name="Ishikawa A."/>
            <person name="Kawashima K."/>
            <person name="Kimura T."/>
            <person name="Kishida Y."/>
            <person name="Kohara M."/>
            <person name="Matsumoto M."/>
            <person name="Matsuno A."/>
            <person name="Muraki A."/>
            <person name="Nakazaki N."/>
            <person name="Shimpo S."/>
            <person name="Sugimoto M."/>
            <person name="Takazawa M."/>
            <person name="Yamada M."/>
            <person name="Yasuda M."/>
            <person name="Tabata S."/>
        </authorList>
    </citation>
    <scope>NUCLEOTIDE SEQUENCE [LARGE SCALE GENOMIC DNA]</scope>
    <source>
        <strain>PCC 7120 / SAG 25.82 / UTEX 2576</strain>
    </source>
</reference>
<comment type="sequence caution" evidence="1">
    <conflict type="frameshift">
        <sequence resource="EMBL-CDS" id="AAC82966"/>
    </conflict>
</comment>
<sequence>MAKRKKSNLQWIKETLDLKPDHRWEAPDGYRIFVANRGAVRFNVPQDWFFEPQEKSFKFSDKKPPKDDCALEVSFNQLPPNDWTLFPLKSTLRKVVEDDGRDVIEKGEIISLKRQTAKIVWTELKFIDTQEEPREAFSRICIGLGSNVQCLITFEFWADQAEQMTPVWDEVMRSLTLGLYIRDPSTGLAFPD</sequence>
<name>Y1449_NOSS1</name>
<accession>P29979</accession>
<keyword id="KW-0535">Nitrogen fixation</keyword>
<keyword id="KW-1185">Reference proteome</keyword>
<gene>
    <name type="ordered locus">alr1449</name>
</gene>
<organism>
    <name type="scientific">Nostoc sp. (strain PCC 7120 / SAG 25.82 / UTEX 2576)</name>
    <dbReference type="NCBI Taxonomy" id="103690"/>
    <lineage>
        <taxon>Bacteria</taxon>
        <taxon>Bacillati</taxon>
        <taxon>Cyanobacteriota</taxon>
        <taxon>Cyanophyceae</taxon>
        <taxon>Nostocales</taxon>
        <taxon>Nostocaceae</taxon>
        <taxon>Nostoc</taxon>
    </lineage>
</organism>
<proteinExistence type="predicted"/>
<evidence type="ECO:0000305" key="1"/>
<dbReference type="EMBL" id="U38537">
    <property type="protein sequence ID" value="AAC82966.1"/>
    <property type="status" value="ALT_FRAME"/>
    <property type="molecule type" value="Genomic_DNA"/>
</dbReference>
<dbReference type="EMBL" id="BA000019">
    <property type="protein sequence ID" value="BAB73406.1"/>
    <property type="molecule type" value="Genomic_DNA"/>
</dbReference>
<dbReference type="PIR" id="AF1987">
    <property type="entry name" value="AF1987"/>
</dbReference>
<dbReference type="PIR" id="B37842">
    <property type="entry name" value="B37842"/>
</dbReference>
<dbReference type="RefSeq" id="WP_010995621.1">
    <property type="nucleotide sequence ID" value="NZ_RSCN01000040.1"/>
</dbReference>
<dbReference type="SMR" id="P29979"/>
<dbReference type="KEGG" id="ana:alr1449"/>
<dbReference type="eggNOG" id="ENOG502ZAYV">
    <property type="taxonomic scope" value="Bacteria"/>
</dbReference>
<dbReference type="OrthoDB" id="528549at2"/>
<dbReference type="Proteomes" id="UP000002483">
    <property type="component" value="Chromosome"/>
</dbReference>
<dbReference type="GO" id="GO:0009399">
    <property type="term" value="P:nitrogen fixation"/>
    <property type="evidence" value="ECO:0007669"/>
    <property type="project" value="UniProtKB-KW"/>
</dbReference>